<proteinExistence type="inferred from homology"/>
<keyword id="KW-0046">Antibiotic resistance</keyword>
<keyword id="KW-1003">Cell membrane</keyword>
<keyword id="KW-0133">Cell shape</keyword>
<keyword id="KW-0961">Cell wall biogenesis/degradation</keyword>
<keyword id="KW-0378">Hydrolase</keyword>
<keyword id="KW-0472">Membrane</keyword>
<keyword id="KW-0573">Peptidoglycan synthesis</keyword>
<keyword id="KW-1185">Reference proteome</keyword>
<keyword id="KW-0812">Transmembrane</keyword>
<keyword id="KW-1133">Transmembrane helix</keyword>
<protein>
    <recommendedName>
        <fullName evidence="1">Undecaprenyl-diphosphatase</fullName>
        <ecNumber evidence="1">3.6.1.27</ecNumber>
    </recommendedName>
    <alternativeName>
        <fullName evidence="1">Bacitracin resistance protein</fullName>
    </alternativeName>
    <alternativeName>
        <fullName evidence="1">Undecaprenyl pyrophosphate phosphatase</fullName>
    </alternativeName>
</protein>
<name>UPPP_MYCMM</name>
<organism>
    <name type="scientific">Mycobacterium marinum (strain ATCC BAA-535 / M)</name>
    <dbReference type="NCBI Taxonomy" id="216594"/>
    <lineage>
        <taxon>Bacteria</taxon>
        <taxon>Bacillati</taxon>
        <taxon>Actinomycetota</taxon>
        <taxon>Actinomycetes</taxon>
        <taxon>Mycobacteriales</taxon>
        <taxon>Mycobacteriaceae</taxon>
        <taxon>Mycobacterium</taxon>
        <taxon>Mycobacterium ulcerans group</taxon>
    </lineage>
</organism>
<evidence type="ECO:0000255" key="1">
    <source>
        <dbReference type="HAMAP-Rule" id="MF_01006"/>
    </source>
</evidence>
<sequence>MSAVAAMSWWQVISLAVVQGLTEFLPVSSSGHLAVVSRVFFSDDAGASFTAVTQLGTEAAVLVYFARDIVRILRAWFDGLVVTSHRNADYRLGWYVIIGTIPICVMGLLFKDEIRSGVRNLWVVATALVVFSGVIALAEYLGRQSRHVEQLTWRDGLVVGVAQTLALVPGVSRSGSTISAGLFLGLDRELAARFGFLLAIPAVFASGLFSLPDAFHPVTEGMSATGPQLLVATLIAFVVGLAAVSWFLRFLLRHSMYWFVGYRVVVGVVVLILLATGTVAAT</sequence>
<dbReference type="EC" id="3.6.1.27" evidence="1"/>
<dbReference type="EMBL" id="CP000854">
    <property type="protein sequence ID" value="ACC41551.1"/>
    <property type="molecule type" value="Genomic_DNA"/>
</dbReference>
<dbReference type="SMR" id="B2HFY7"/>
<dbReference type="STRING" id="216594.MMAR_3116"/>
<dbReference type="KEGG" id="mmi:MMAR_3116"/>
<dbReference type="eggNOG" id="COG1968">
    <property type="taxonomic scope" value="Bacteria"/>
</dbReference>
<dbReference type="HOGENOM" id="CLU_060296_1_0_11"/>
<dbReference type="Proteomes" id="UP000001190">
    <property type="component" value="Chromosome"/>
</dbReference>
<dbReference type="GO" id="GO:0005886">
    <property type="term" value="C:plasma membrane"/>
    <property type="evidence" value="ECO:0007669"/>
    <property type="project" value="UniProtKB-SubCell"/>
</dbReference>
<dbReference type="GO" id="GO:0050380">
    <property type="term" value="F:undecaprenyl-diphosphatase activity"/>
    <property type="evidence" value="ECO:0007669"/>
    <property type="project" value="UniProtKB-UniRule"/>
</dbReference>
<dbReference type="GO" id="GO:0071555">
    <property type="term" value="P:cell wall organization"/>
    <property type="evidence" value="ECO:0007669"/>
    <property type="project" value="UniProtKB-KW"/>
</dbReference>
<dbReference type="GO" id="GO:0009252">
    <property type="term" value="P:peptidoglycan biosynthetic process"/>
    <property type="evidence" value="ECO:0007669"/>
    <property type="project" value="UniProtKB-KW"/>
</dbReference>
<dbReference type="GO" id="GO:0008360">
    <property type="term" value="P:regulation of cell shape"/>
    <property type="evidence" value="ECO:0007669"/>
    <property type="project" value="UniProtKB-KW"/>
</dbReference>
<dbReference type="GO" id="GO:0046677">
    <property type="term" value="P:response to antibiotic"/>
    <property type="evidence" value="ECO:0007669"/>
    <property type="project" value="UniProtKB-UniRule"/>
</dbReference>
<dbReference type="HAMAP" id="MF_01006">
    <property type="entry name" value="Undec_diphosphatase"/>
    <property type="match status" value="1"/>
</dbReference>
<dbReference type="InterPro" id="IPR003824">
    <property type="entry name" value="UppP"/>
</dbReference>
<dbReference type="NCBIfam" id="NF001392">
    <property type="entry name" value="PRK00281.2-1"/>
    <property type="match status" value="1"/>
</dbReference>
<dbReference type="NCBIfam" id="TIGR00753">
    <property type="entry name" value="undec_PP_bacA"/>
    <property type="match status" value="1"/>
</dbReference>
<dbReference type="PANTHER" id="PTHR30622">
    <property type="entry name" value="UNDECAPRENYL-DIPHOSPHATASE"/>
    <property type="match status" value="1"/>
</dbReference>
<dbReference type="PANTHER" id="PTHR30622:SF4">
    <property type="entry name" value="UNDECAPRENYL-DIPHOSPHATASE"/>
    <property type="match status" value="1"/>
</dbReference>
<dbReference type="Pfam" id="PF02673">
    <property type="entry name" value="BacA"/>
    <property type="match status" value="1"/>
</dbReference>
<gene>
    <name evidence="1" type="primary">uppP</name>
    <name type="ordered locus">MMAR_3116</name>
</gene>
<accession>B2HFY7</accession>
<comment type="function">
    <text evidence="1">Catalyzes the dephosphorylation of undecaprenyl diphosphate (UPP). Confers resistance to bacitracin.</text>
</comment>
<comment type="catalytic activity">
    <reaction evidence="1">
        <text>di-trans,octa-cis-undecaprenyl diphosphate + H2O = di-trans,octa-cis-undecaprenyl phosphate + phosphate + H(+)</text>
        <dbReference type="Rhea" id="RHEA:28094"/>
        <dbReference type="ChEBI" id="CHEBI:15377"/>
        <dbReference type="ChEBI" id="CHEBI:15378"/>
        <dbReference type="ChEBI" id="CHEBI:43474"/>
        <dbReference type="ChEBI" id="CHEBI:58405"/>
        <dbReference type="ChEBI" id="CHEBI:60392"/>
        <dbReference type="EC" id="3.6.1.27"/>
    </reaction>
</comment>
<comment type="subcellular location">
    <subcellularLocation>
        <location evidence="1">Cell membrane</location>
        <topology evidence="1">Multi-pass membrane protein</topology>
    </subcellularLocation>
</comment>
<comment type="miscellaneous">
    <text>Bacitracin is thought to be involved in the inhibition of peptidoglycan synthesis by sequestering undecaprenyl diphosphate, thereby reducing the pool of lipid carrier available.</text>
</comment>
<comment type="similarity">
    <text evidence="1">Belongs to the UppP family.</text>
</comment>
<feature type="chain" id="PRO_1000197383" description="Undecaprenyl-diphosphatase">
    <location>
        <begin position="1"/>
        <end position="282"/>
    </location>
</feature>
<feature type="transmembrane region" description="Helical" evidence="1">
    <location>
        <begin position="90"/>
        <end position="110"/>
    </location>
</feature>
<feature type="transmembrane region" description="Helical" evidence="1">
    <location>
        <begin position="121"/>
        <end position="141"/>
    </location>
</feature>
<feature type="transmembrane region" description="Helical" evidence="1">
    <location>
        <begin position="165"/>
        <end position="185"/>
    </location>
</feature>
<feature type="transmembrane region" description="Helical" evidence="1">
    <location>
        <begin position="194"/>
        <end position="214"/>
    </location>
</feature>
<feature type="transmembrane region" description="Helical" evidence="1">
    <location>
        <begin position="228"/>
        <end position="248"/>
    </location>
</feature>
<feature type="transmembrane region" description="Helical" evidence="1">
    <location>
        <begin position="256"/>
        <end position="276"/>
    </location>
</feature>
<reference key="1">
    <citation type="journal article" date="2008" name="Genome Res.">
        <title>Insights from the complete genome sequence of Mycobacterium marinum on the evolution of Mycobacterium tuberculosis.</title>
        <authorList>
            <person name="Stinear T.P."/>
            <person name="Seemann T."/>
            <person name="Harrison P.F."/>
            <person name="Jenkin G.A."/>
            <person name="Davies J.K."/>
            <person name="Johnson P.D."/>
            <person name="Abdellah Z."/>
            <person name="Arrowsmith C."/>
            <person name="Chillingworth T."/>
            <person name="Churcher C."/>
            <person name="Clarke K."/>
            <person name="Cronin A."/>
            <person name="Davis P."/>
            <person name="Goodhead I."/>
            <person name="Holroyd N."/>
            <person name="Jagels K."/>
            <person name="Lord A."/>
            <person name="Moule S."/>
            <person name="Mungall K."/>
            <person name="Norbertczak H."/>
            <person name="Quail M.A."/>
            <person name="Rabbinowitsch E."/>
            <person name="Walker D."/>
            <person name="White B."/>
            <person name="Whitehead S."/>
            <person name="Small P.L."/>
            <person name="Brosch R."/>
            <person name="Ramakrishnan L."/>
            <person name="Fischbach M.A."/>
            <person name="Parkhill J."/>
            <person name="Cole S.T."/>
        </authorList>
    </citation>
    <scope>NUCLEOTIDE SEQUENCE [LARGE SCALE GENOMIC DNA]</scope>
    <source>
        <strain>ATCC BAA-535 / M</strain>
    </source>
</reference>